<keyword id="KW-0131">Cell cycle</keyword>
<keyword id="KW-0132">Cell division</keyword>
<keyword id="KW-0238">DNA-binding</keyword>
<accession>B1L268</accession>
<feature type="chain" id="PRO_0000376462" description="Probable cell division protein WhiA">
    <location>
        <begin position="1"/>
        <end position="315"/>
    </location>
</feature>
<feature type="DNA-binding region" description="H-T-H motif" evidence="1">
    <location>
        <begin position="280"/>
        <end position="313"/>
    </location>
</feature>
<organism>
    <name type="scientific">Clostridium botulinum (strain Loch Maree / Type A3)</name>
    <dbReference type="NCBI Taxonomy" id="498214"/>
    <lineage>
        <taxon>Bacteria</taxon>
        <taxon>Bacillati</taxon>
        <taxon>Bacillota</taxon>
        <taxon>Clostridia</taxon>
        <taxon>Eubacteriales</taxon>
        <taxon>Clostridiaceae</taxon>
        <taxon>Clostridium</taxon>
    </lineage>
</organism>
<evidence type="ECO:0000255" key="1">
    <source>
        <dbReference type="HAMAP-Rule" id="MF_01420"/>
    </source>
</evidence>
<reference key="1">
    <citation type="journal article" date="2007" name="PLoS ONE">
        <title>Analysis of the neurotoxin complex genes in Clostridium botulinum A1-A4 and B1 strains: BoNT/A3, /Ba4 and /B1 clusters are located within plasmids.</title>
        <authorList>
            <person name="Smith T.J."/>
            <person name="Hill K.K."/>
            <person name="Foley B.T."/>
            <person name="Detter J.C."/>
            <person name="Munk A.C."/>
            <person name="Bruce D.C."/>
            <person name="Doggett N.A."/>
            <person name="Smith L.A."/>
            <person name="Marks J.D."/>
            <person name="Xie G."/>
            <person name="Brettin T.S."/>
        </authorList>
    </citation>
    <scope>NUCLEOTIDE SEQUENCE [LARGE SCALE GENOMIC DNA]</scope>
    <source>
        <strain>Loch Maree / Type A3</strain>
    </source>
</reference>
<comment type="function">
    <text evidence="1">Involved in cell division and chromosome segregation.</text>
</comment>
<comment type="similarity">
    <text evidence="1">Belongs to the WhiA family.</text>
</comment>
<dbReference type="EMBL" id="CP000962">
    <property type="protein sequence ID" value="ACA54788.1"/>
    <property type="molecule type" value="Genomic_DNA"/>
</dbReference>
<dbReference type="RefSeq" id="WP_003357358.1">
    <property type="nucleotide sequence ID" value="NC_010520.1"/>
</dbReference>
<dbReference type="SMR" id="B1L268"/>
<dbReference type="GeneID" id="5187629"/>
<dbReference type="KEGG" id="cbl:CLK_2807"/>
<dbReference type="HOGENOM" id="CLU_053282_0_0_9"/>
<dbReference type="GO" id="GO:0003677">
    <property type="term" value="F:DNA binding"/>
    <property type="evidence" value="ECO:0007669"/>
    <property type="project" value="UniProtKB-UniRule"/>
</dbReference>
<dbReference type="GO" id="GO:0004519">
    <property type="term" value="F:endonuclease activity"/>
    <property type="evidence" value="ECO:0007669"/>
    <property type="project" value="InterPro"/>
</dbReference>
<dbReference type="GO" id="GO:0051301">
    <property type="term" value="P:cell division"/>
    <property type="evidence" value="ECO:0007669"/>
    <property type="project" value="UniProtKB-UniRule"/>
</dbReference>
<dbReference type="GO" id="GO:0043937">
    <property type="term" value="P:regulation of sporulation"/>
    <property type="evidence" value="ECO:0007669"/>
    <property type="project" value="InterPro"/>
</dbReference>
<dbReference type="Gene3D" id="3.10.28.10">
    <property type="entry name" value="Homing endonucleases"/>
    <property type="match status" value="1"/>
</dbReference>
<dbReference type="HAMAP" id="MF_01420">
    <property type="entry name" value="HTH_type_WhiA"/>
    <property type="match status" value="1"/>
</dbReference>
<dbReference type="InterPro" id="IPR027434">
    <property type="entry name" value="Homing_endonucl"/>
</dbReference>
<dbReference type="InterPro" id="IPR004042">
    <property type="entry name" value="Intein_endonuc_central"/>
</dbReference>
<dbReference type="InterPro" id="IPR018478">
    <property type="entry name" value="Sporu_reg_WhiA_N_dom"/>
</dbReference>
<dbReference type="InterPro" id="IPR003802">
    <property type="entry name" value="Sporulation_regulator_WhiA"/>
</dbReference>
<dbReference type="InterPro" id="IPR023054">
    <property type="entry name" value="Sporulation_regulator_WhiA_C"/>
</dbReference>
<dbReference type="InterPro" id="IPR039518">
    <property type="entry name" value="WhiA_LAGLIDADG_dom"/>
</dbReference>
<dbReference type="NCBIfam" id="TIGR00647">
    <property type="entry name" value="DNA_bind_WhiA"/>
    <property type="match status" value="1"/>
</dbReference>
<dbReference type="PANTHER" id="PTHR37307">
    <property type="entry name" value="CELL DIVISION PROTEIN WHIA-RELATED"/>
    <property type="match status" value="1"/>
</dbReference>
<dbReference type="PANTHER" id="PTHR37307:SF1">
    <property type="entry name" value="CELL DIVISION PROTEIN WHIA-RELATED"/>
    <property type="match status" value="1"/>
</dbReference>
<dbReference type="Pfam" id="PF02650">
    <property type="entry name" value="HTH_WhiA"/>
    <property type="match status" value="1"/>
</dbReference>
<dbReference type="Pfam" id="PF14527">
    <property type="entry name" value="LAGLIDADG_WhiA"/>
    <property type="match status" value="1"/>
</dbReference>
<dbReference type="Pfam" id="PF10298">
    <property type="entry name" value="WhiA_N"/>
    <property type="match status" value="1"/>
</dbReference>
<dbReference type="SUPFAM" id="SSF55608">
    <property type="entry name" value="Homing endonucleases"/>
    <property type="match status" value="1"/>
</dbReference>
<dbReference type="PROSITE" id="PS50819">
    <property type="entry name" value="INTEIN_ENDONUCLEASE"/>
    <property type="match status" value="1"/>
</dbReference>
<gene>
    <name evidence="1" type="primary">whiA</name>
    <name type="ordered locus">CLK_2807</name>
</gene>
<name>WHIA_CLOBM</name>
<proteinExistence type="inferred from homology"/>
<sequence length="315" mass="35924">MSFSLKVKNEVCKHVEVNKQEAIAELSAIMKVSGTLLFTNKQFNFKITTENAAIARLVFKILKEHFGIHTEIMIKKNNSLKKNNIYIILISEEEGVKSLLKEVGIIKETINVFSLDYNIPKSIIECDECRRAYIRGAFLGGGSISNPEKTYHLEFVTHNEEYAKDLSNLINSYNLNSKVIKRKNSYIIYLKEGEQIVDLLNIIGAHASLLELENVRIMKEMRNNVNRLVNCETANLSKTVNAAVRQVESIKFIEREIGLGRLPKNLRDVAELRIKYPDESLRELGKMLNPPVGKSGVNHRLRRIEKIADELKQGI</sequence>
<protein>
    <recommendedName>
        <fullName evidence="1">Probable cell division protein WhiA</fullName>
    </recommendedName>
</protein>